<reference key="1">
    <citation type="journal article" date="2008" name="PLoS Genet.">
        <title>Complete genome sequence of the N2-fixing broad host range endophyte Klebsiella pneumoniae 342 and virulence predictions verified in mice.</title>
        <authorList>
            <person name="Fouts D.E."/>
            <person name="Tyler H.L."/>
            <person name="DeBoy R.T."/>
            <person name="Daugherty S."/>
            <person name="Ren Q."/>
            <person name="Badger J.H."/>
            <person name="Durkin A.S."/>
            <person name="Huot H."/>
            <person name="Shrivastava S."/>
            <person name="Kothari S."/>
            <person name="Dodson R.J."/>
            <person name="Mohamoud Y."/>
            <person name="Khouri H."/>
            <person name="Roesch L.F.W."/>
            <person name="Krogfelt K.A."/>
            <person name="Struve C."/>
            <person name="Triplett E.W."/>
            <person name="Methe B.A."/>
        </authorList>
    </citation>
    <scope>NUCLEOTIDE SEQUENCE [LARGE SCALE GENOMIC DNA]</scope>
    <source>
        <strain>342</strain>
    </source>
</reference>
<accession>B5Y299</accession>
<sequence length="179" mass="19555">MSSRILTSHFSGLEEFLQQHAALLAKSTDGTVAVFANNAPAFYALTPARLAQLLELEARLARPGSDIALAPQFFEEPAAAPVAVPMGKFAMYADWQPDADFQRLAALWGIALSQPVTPEELAAFVAYWQAEGKVFHHVQWQQKLARSVQISRASNGGQPKRDVNSVSEPDSHIPRGFRG</sequence>
<evidence type="ECO:0000255" key="1">
    <source>
        <dbReference type="HAMAP-Rule" id="MF_01061"/>
    </source>
</evidence>
<evidence type="ECO:0000256" key="2">
    <source>
        <dbReference type="SAM" id="MobiDB-lite"/>
    </source>
</evidence>
<comment type="function">
    <text evidence="1">Involved in the restart of stalled replication forks, which reloads the replicative helicase on sites other than the origin of replication. Can function in multiple replication restart pathways. Displaces ssDNA from a PriB-ssDNA complex. Probably forms a spiral filament on ssDNA.</text>
</comment>
<comment type="subunit">
    <text evidence="1">Homooligomerizes. Interacts with PriB. Component of the replication restart primosome. Primosome assembly occurs via a 'hand-off' mechanism. PriA binds to replication forks, subsequently PriB then DnaT bind; DnaT then displaces ssDNA to generate the helicase loading substrate.</text>
</comment>
<comment type="similarity">
    <text evidence="1">Belongs to the DnaT family.</text>
</comment>
<protein>
    <recommendedName>
        <fullName evidence="1">Replication restart protein DnaT</fullName>
    </recommendedName>
</protein>
<proteinExistence type="inferred from homology"/>
<organism>
    <name type="scientific">Klebsiella pneumoniae (strain 342)</name>
    <dbReference type="NCBI Taxonomy" id="507522"/>
    <lineage>
        <taxon>Bacteria</taxon>
        <taxon>Pseudomonadati</taxon>
        <taxon>Pseudomonadota</taxon>
        <taxon>Gammaproteobacteria</taxon>
        <taxon>Enterobacterales</taxon>
        <taxon>Enterobacteriaceae</taxon>
        <taxon>Klebsiella/Raoultella group</taxon>
        <taxon>Klebsiella</taxon>
        <taxon>Klebsiella pneumoniae complex</taxon>
    </lineage>
</organism>
<dbReference type="EMBL" id="CP000964">
    <property type="protein sequence ID" value="ACI08267.1"/>
    <property type="molecule type" value="Genomic_DNA"/>
</dbReference>
<dbReference type="SMR" id="B5Y299"/>
<dbReference type="KEGG" id="kpe:KPK_4802"/>
<dbReference type="HOGENOM" id="CLU_1501592_0_0_6"/>
<dbReference type="Proteomes" id="UP000001734">
    <property type="component" value="Chromosome"/>
</dbReference>
<dbReference type="GO" id="GO:1990077">
    <property type="term" value="C:primosome complex"/>
    <property type="evidence" value="ECO:0007669"/>
    <property type="project" value="UniProtKB-KW"/>
</dbReference>
<dbReference type="GO" id="GO:0006269">
    <property type="term" value="P:DNA replication, synthesis of primer"/>
    <property type="evidence" value="ECO:0007669"/>
    <property type="project" value="UniProtKB-UniRule"/>
</dbReference>
<dbReference type="Gene3D" id="1.10.8.1180">
    <property type="match status" value="1"/>
</dbReference>
<dbReference type="HAMAP" id="MF_01061">
    <property type="entry name" value="DnaT"/>
    <property type="match status" value="1"/>
</dbReference>
<dbReference type="InterPro" id="IPR020917">
    <property type="entry name" value="DnaT"/>
</dbReference>
<dbReference type="InterPro" id="IPR040480">
    <property type="entry name" value="DnaT_DNA_bind"/>
</dbReference>
<dbReference type="NCBIfam" id="NF002770">
    <property type="entry name" value="PRK02854.1"/>
    <property type="match status" value="1"/>
</dbReference>
<dbReference type="Pfam" id="PF17948">
    <property type="entry name" value="DnaT"/>
    <property type="match status" value="1"/>
</dbReference>
<name>DNAT_KLEP3</name>
<keyword id="KW-0235">DNA replication</keyword>
<keyword id="KW-0238">DNA-binding</keyword>
<keyword id="KW-0639">Primosome</keyword>
<gene>
    <name evidence="1" type="primary">dnaT</name>
    <name type="ordered locus">KPK_4802</name>
</gene>
<feature type="chain" id="PRO_1000149692" description="Replication restart protein DnaT">
    <location>
        <begin position="1"/>
        <end position="179"/>
    </location>
</feature>
<feature type="region of interest" description="Disordered" evidence="2">
    <location>
        <begin position="151"/>
        <end position="179"/>
    </location>
</feature>
<feature type="compositionally biased region" description="Basic and acidic residues" evidence="2">
    <location>
        <begin position="159"/>
        <end position="173"/>
    </location>
</feature>